<comment type="function">
    <text evidence="1">Inhibits the supercoiling activity of DNA gyrase. Acts by inhibiting DNA gyrase at an early step, prior to (or at the step of) binding of DNA by the gyrase. It protects cells against toxins that target DNA gyrase, by inhibiting activity of these toxins and reducing the formation of lethal double-strand breaks in the cell.</text>
</comment>
<comment type="subunit">
    <text evidence="1">Interacts with DNA gyrase.</text>
</comment>
<comment type="subcellular location">
    <subcellularLocation>
        <location evidence="1">Cytoplasm</location>
    </subcellularLocation>
</comment>
<comment type="similarity">
    <text evidence="1">Belongs to the DNA gyrase inhibitor family.</text>
</comment>
<proteinExistence type="inferred from homology"/>
<keyword id="KW-0963">Cytoplasm</keyword>
<keyword id="KW-1185">Reference proteome</keyword>
<keyword id="KW-0346">Stress response</keyword>
<evidence type="ECO:0000255" key="1">
    <source>
        <dbReference type="HAMAP-Rule" id="MF_01896"/>
    </source>
</evidence>
<gene>
    <name evidence="1" type="primary">sbmC</name>
    <name type="ordered locus">EbC_28880</name>
</gene>
<name>SBMC_ERWBE</name>
<accession>D8MUB2</accession>
<sequence>MNVEIVEREESKTAGFHLVGPWEVTAPEGFDKLVAWTSKHNVMGPWMGVYHGNPRAVPAEELKIETVIGVPTDFELPEGSEGARLSIIPAGTYAMNLVHVNDGDFTKPWYAFFDEWLPDSGYVMAEGPCFDHYLNDGSQSGEWDIELYIPVSKAE</sequence>
<feature type="chain" id="PRO_0000409700" description="DNA gyrase inhibitor">
    <location>
        <begin position="1"/>
        <end position="155"/>
    </location>
</feature>
<protein>
    <recommendedName>
        <fullName evidence="1">DNA gyrase inhibitor</fullName>
    </recommendedName>
</protein>
<dbReference type="EMBL" id="FP236843">
    <property type="protein sequence ID" value="CAX60419.1"/>
    <property type="molecule type" value="Genomic_DNA"/>
</dbReference>
<dbReference type="RefSeq" id="WP_013202904.1">
    <property type="nucleotide sequence ID" value="NC_014306.1"/>
</dbReference>
<dbReference type="SMR" id="D8MUB2"/>
<dbReference type="STRING" id="634500.EbC_28880"/>
<dbReference type="GeneID" id="90512866"/>
<dbReference type="KEGG" id="ebi:EbC_28880"/>
<dbReference type="eggNOG" id="COG3449">
    <property type="taxonomic scope" value="Bacteria"/>
</dbReference>
<dbReference type="HOGENOM" id="CLU_113664_3_2_6"/>
<dbReference type="Proteomes" id="UP000008793">
    <property type="component" value="Chromosome"/>
</dbReference>
<dbReference type="GO" id="GO:0005737">
    <property type="term" value="C:cytoplasm"/>
    <property type="evidence" value="ECO:0007669"/>
    <property type="project" value="UniProtKB-SubCell"/>
</dbReference>
<dbReference type="GO" id="GO:0008657">
    <property type="term" value="F:DNA topoisomerase type II (double strand cut, ATP-hydrolyzing) inhibitor activity"/>
    <property type="evidence" value="ECO:0007669"/>
    <property type="project" value="UniProtKB-UniRule"/>
</dbReference>
<dbReference type="Gene3D" id="3.20.80.10">
    <property type="entry name" value="Regulatory factor, effector binding domain"/>
    <property type="match status" value="1"/>
</dbReference>
<dbReference type="HAMAP" id="MF_01896">
    <property type="entry name" value="DNA_gyrase_inhibitor"/>
    <property type="match status" value="1"/>
</dbReference>
<dbReference type="InterPro" id="IPR010499">
    <property type="entry name" value="AraC_E-bd"/>
</dbReference>
<dbReference type="InterPro" id="IPR050908">
    <property type="entry name" value="DNA_gyrase_inhibitor"/>
</dbReference>
<dbReference type="InterPro" id="IPR024911">
    <property type="entry name" value="DNA_gyrase_inhibitor_GyrI"/>
</dbReference>
<dbReference type="InterPro" id="IPR029442">
    <property type="entry name" value="GyrI-like"/>
</dbReference>
<dbReference type="InterPro" id="IPR011256">
    <property type="entry name" value="Reg_factor_effector_dom_sf"/>
</dbReference>
<dbReference type="NCBIfam" id="NF007451">
    <property type="entry name" value="PRK10016.1"/>
    <property type="match status" value="1"/>
</dbReference>
<dbReference type="PANTHER" id="PTHR40055:SF2">
    <property type="entry name" value="DNA GYRASE INHIBITOR"/>
    <property type="match status" value="1"/>
</dbReference>
<dbReference type="PANTHER" id="PTHR40055">
    <property type="entry name" value="TRANSCRIPTIONAL REGULATOR YGIV-RELATED"/>
    <property type="match status" value="1"/>
</dbReference>
<dbReference type="Pfam" id="PF06445">
    <property type="entry name" value="GyrI-like"/>
    <property type="match status" value="1"/>
</dbReference>
<dbReference type="SMART" id="SM00871">
    <property type="entry name" value="AraC_E_bind"/>
    <property type="match status" value="1"/>
</dbReference>
<dbReference type="SUPFAM" id="SSF55136">
    <property type="entry name" value="Probable bacterial effector-binding domain"/>
    <property type="match status" value="1"/>
</dbReference>
<organism>
    <name type="scientific">Erwinia billingiae (strain Eb661)</name>
    <dbReference type="NCBI Taxonomy" id="634500"/>
    <lineage>
        <taxon>Bacteria</taxon>
        <taxon>Pseudomonadati</taxon>
        <taxon>Pseudomonadota</taxon>
        <taxon>Gammaproteobacteria</taxon>
        <taxon>Enterobacterales</taxon>
        <taxon>Erwiniaceae</taxon>
        <taxon>Erwinia</taxon>
    </lineage>
</organism>
<reference key="1">
    <citation type="journal article" date="2010" name="BMC Genomics">
        <title>Genome comparison of the epiphytic bacteria Erwinia billingiae and E. tasmaniensis with the pear pathogen E. pyrifoliae.</title>
        <authorList>
            <person name="Kube M."/>
            <person name="Migdoll A.M."/>
            <person name="Gehring I."/>
            <person name="Heitmann K."/>
            <person name="Mayer Y."/>
            <person name="Kuhl H."/>
            <person name="Knaust F."/>
            <person name="Geider K."/>
            <person name="Reinhardt R."/>
        </authorList>
    </citation>
    <scope>NUCLEOTIDE SEQUENCE [LARGE SCALE GENOMIC DNA]</scope>
    <source>
        <strain>Eb661</strain>
    </source>
</reference>